<proteinExistence type="evidence at transcript level"/>
<evidence type="ECO:0000250" key="1"/>
<evidence type="ECO:0000250" key="2">
    <source>
        <dbReference type="UniProtKB" id="Q5JTC6"/>
    </source>
</evidence>
<evidence type="ECO:0000256" key="3">
    <source>
        <dbReference type="SAM" id="MobiDB-lite"/>
    </source>
</evidence>
<evidence type="ECO:0000269" key="4">
    <source>
    </source>
</evidence>
<evidence type="ECO:0000305" key="5"/>
<organism>
    <name type="scientific">Mus musculus</name>
    <name type="common">Mouse</name>
    <dbReference type="NCBI Taxonomy" id="10090"/>
    <lineage>
        <taxon>Eukaryota</taxon>
        <taxon>Metazoa</taxon>
        <taxon>Chordata</taxon>
        <taxon>Craniata</taxon>
        <taxon>Vertebrata</taxon>
        <taxon>Euteleostomi</taxon>
        <taxon>Mammalia</taxon>
        <taxon>Eutheria</taxon>
        <taxon>Euarchontoglires</taxon>
        <taxon>Glires</taxon>
        <taxon>Rodentia</taxon>
        <taxon>Myomorpha</taxon>
        <taxon>Muroidea</taxon>
        <taxon>Muridae</taxon>
        <taxon>Murinae</taxon>
        <taxon>Mus</taxon>
        <taxon>Mus</taxon>
    </lineage>
</organism>
<gene>
    <name type="primary">Amer1</name>
    <name type="synonym">Fam123b</name>
</gene>
<comment type="function">
    <text evidence="1">Regulator of the canonical Wnt signaling pathway. Acts by specifically binding phosphatidylinositol 4,5-bisphosphate (PtdIns(4,5)P2), translocating to the cell membrane and interacting with key regulators of the canonical Wnt signaling pathway, such as components of the beta-catenin destruction complex. Acts both as a positive and negative regulator of the Wnt signaling pathway, depending on the context: acts as a positive regulator by promoting LRP6 phosphorylation. Also acts as a negative regulator by acting as a scaffold protein for the beta-catenin destruction complex and promoting stabilization of Axin at the cell membrane. Promotes CTNNB1 ubiquitination and degradation. Involved in kidney development (By similarity).</text>
</comment>
<comment type="subunit">
    <text evidence="1">Interacts with CTNNB1, AXIN1, LRP6, KEAP1, APC and BTRC. Interacts with SCF (SKP1-CUL1-F-box protein) E3 ubiquitin-protein ligase complexes containing BTRC and/or FBXW11. Identified in the beta-catenin destruction complex containing CTNNB1, APC, AXIN1 and AXIN2. Interacts with WT1 (By similarity).</text>
</comment>
<comment type="subcellular location">
    <subcellularLocation>
        <location evidence="1">Cytoplasm</location>
    </subcellularLocation>
    <subcellularLocation>
        <location evidence="1">Cell membrane</location>
        <topology evidence="1">Peripheral membrane protein</topology>
        <orientation evidence="1">Cytoplasmic side</orientation>
    </subcellularLocation>
    <subcellularLocation>
        <location evidence="1">Nucleus</location>
    </subcellularLocation>
    <text evidence="1">Shuttles between nucleus and cytoplasm. Detected in nuclear paraspeckles that are found close to splicing speckles. Translocates to the cell membrane following binding to PtdIns(4,5)P2 (By similarity).</text>
</comment>
<comment type="tissue specificity">
    <text evidence="4">Expressed in kidney.</text>
</comment>
<comment type="developmental stage">
    <text evidence="4">In embryos, it is highly expressed in the neonatal brain and kidney and then declines substantially in the mature organs. Also expressed in lung and spleen. Expressed in the condensing metanephric mesenchyme and in early epithelial structures that are precursors to glomeruli.</text>
</comment>
<comment type="similarity">
    <text evidence="5">Belongs to the Amer family.</text>
</comment>
<comment type="sequence caution" evidence="5">
    <conflict type="miscellaneous discrepancy">
        <sequence resource="EMBL-CDS" id="AAH53442"/>
    </conflict>
    <text>Contaminating sequence. Potential poly-A sequence.</text>
</comment>
<comment type="sequence caution" evidence="5">
    <conflict type="frameshift">
        <sequence resource="EMBL-CDS" id="BAC25373"/>
    </conflict>
</comment>
<comment type="sequence caution" evidence="5">
    <conflict type="erroneous termination">
        <sequence resource="EMBL-CDS" id="BAC33914"/>
    </conflict>
    <text>Truncated C-terminus.</text>
</comment>
<protein>
    <recommendedName>
        <fullName>APC membrane recruitment protein 1</fullName>
        <shortName>Amer1</shortName>
    </recommendedName>
    <alternativeName>
        <fullName>Protein FAM123B</fullName>
    </alternativeName>
</protein>
<sequence length="1132" mass="124164">MESQQDEAVQTKGASTSSDAQDQGAEKGAKNKTTEATEGPTSEPPLSGPGRLKKTAMKLFGGKKGICTLPSFFGGGRSKGSGKVSSKKSLNKSKTHDGLSEASQGPEDVVIEETDLSTPLSKSSAQFPSSQSANGALEIGSKHKTSGTEAIEKAGVEKVPSVHKPKKSLKSFFSSIRRHRKGKTSGADQSVPGAKELEGARTRSHEHVSSISLPSSEEIFRDTRKENAKPQDAPGPKMSPAQVHFSPTTEKAACKNPEKLTRTCASEFMQPKPVLEGGSLEEPHTSETEGKVVAGEVNPPNGPVGDQLSLLFGDVTSLKSFDSLTGCGDIIAEQDMDSMTDSMASGGQRANRDGTKRSSCLVTYQGGGEEMALPDDDDNDDEEEEEEEEEEEEEEEEEEEEEEEEEEEELLEDEEEVKDGEENDDLEYLWASAQIYPRFNMNLGYHTAISPSHQGYMLLDPVQSYPNLGLGELLTPQSDQQESAPNSDEGYYDSTTPGFEDDSGEALGLAHRDCLPRDSYSGDALYEFYEPDDSLEHSPPGDDCLYDLRGRNSEMLDPFLNLEPFSSRPPGAMETEEERLVTIQKQLLYWELRREQREAQEACAREAHAREAYARDTHTRESYGRNVRARETQALEAHSQEGRVQETKVRQEKPALEYQMRPLGPSVMGLVAGTSGGSQTSHRGTTSAFPATSSSEPDWRDFRPLEKRFEGTCSKKDQSTCLMQLFQSDAMFEPDMQEANFGGSPRKAYPSYSPPEEPEEEEEEKEGNATVSFSQALVEFTSNGNLFTSMSYSSDSDSSFTQNLPELPPMVTFDIADVERDGEGKCEENPEFNNDEDLTASLEAFELGYYHKHAFNSYHSRFYQGLPWGVSSLPRYLGLPGVHPRPPPAAMALNRRSRSLDNAESLELELSSSHLAQGYMESDELQAHQEDSDEEGEEEEGEWGRDSPLSLYTEPPGVYDWPPWAHCPLPVGPGLAWMSPNQLYEPFNQSSYVQATCCVPPVAMPVSVPGRTPGDSVSQLARPSHLPLPMGPCYNLQSQASQSGRAKPRDVLLPVDEPSCSSISGANSQSQAKPVGITHGIPQLPRVRPEPFQLQPNHYRASNLDLSKERGEQGASLSTSYSSTAMNGNLAK</sequence>
<accession>Q7TS75</accession>
<accession>B1AUM2</accession>
<accession>Q8BT92</accession>
<accession>Q8C7P7</accession>
<name>AMER1_MOUSE</name>
<reference key="1">
    <citation type="journal article" date="2009" name="PLoS Biol.">
        <title>Lineage-specific biology revealed by a finished genome assembly of the mouse.</title>
        <authorList>
            <person name="Church D.M."/>
            <person name="Goodstadt L."/>
            <person name="Hillier L.W."/>
            <person name="Zody M.C."/>
            <person name="Goldstein S."/>
            <person name="She X."/>
            <person name="Bult C.J."/>
            <person name="Agarwala R."/>
            <person name="Cherry J.L."/>
            <person name="DiCuccio M."/>
            <person name="Hlavina W."/>
            <person name="Kapustin Y."/>
            <person name="Meric P."/>
            <person name="Maglott D."/>
            <person name="Birtle Z."/>
            <person name="Marques A.C."/>
            <person name="Graves T."/>
            <person name="Zhou S."/>
            <person name="Teague B."/>
            <person name="Potamousis K."/>
            <person name="Churas C."/>
            <person name="Place M."/>
            <person name="Herschleb J."/>
            <person name="Runnheim R."/>
            <person name="Forrest D."/>
            <person name="Amos-Landgraf J."/>
            <person name="Schwartz D.C."/>
            <person name="Cheng Z."/>
            <person name="Lindblad-Toh K."/>
            <person name="Eichler E.E."/>
            <person name="Ponting C.P."/>
        </authorList>
    </citation>
    <scope>NUCLEOTIDE SEQUENCE [LARGE SCALE GENOMIC DNA]</scope>
    <source>
        <strain>C57BL/6J</strain>
    </source>
</reference>
<reference key="2">
    <citation type="journal article" date="2005" name="Science">
        <title>The transcriptional landscape of the mammalian genome.</title>
        <authorList>
            <person name="Carninci P."/>
            <person name="Kasukawa T."/>
            <person name="Katayama S."/>
            <person name="Gough J."/>
            <person name="Frith M.C."/>
            <person name="Maeda N."/>
            <person name="Oyama R."/>
            <person name="Ravasi T."/>
            <person name="Lenhard B."/>
            <person name="Wells C."/>
            <person name="Kodzius R."/>
            <person name="Shimokawa K."/>
            <person name="Bajic V.B."/>
            <person name="Brenner S.E."/>
            <person name="Batalov S."/>
            <person name="Forrest A.R."/>
            <person name="Zavolan M."/>
            <person name="Davis M.J."/>
            <person name="Wilming L.G."/>
            <person name="Aidinis V."/>
            <person name="Allen J.E."/>
            <person name="Ambesi-Impiombato A."/>
            <person name="Apweiler R."/>
            <person name="Aturaliya R.N."/>
            <person name="Bailey T.L."/>
            <person name="Bansal M."/>
            <person name="Baxter L."/>
            <person name="Beisel K.W."/>
            <person name="Bersano T."/>
            <person name="Bono H."/>
            <person name="Chalk A.M."/>
            <person name="Chiu K.P."/>
            <person name="Choudhary V."/>
            <person name="Christoffels A."/>
            <person name="Clutterbuck D.R."/>
            <person name="Crowe M.L."/>
            <person name="Dalla E."/>
            <person name="Dalrymple B.P."/>
            <person name="de Bono B."/>
            <person name="Della Gatta G."/>
            <person name="di Bernardo D."/>
            <person name="Down T."/>
            <person name="Engstrom P."/>
            <person name="Fagiolini M."/>
            <person name="Faulkner G."/>
            <person name="Fletcher C.F."/>
            <person name="Fukushima T."/>
            <person name="Furuno M."/>
            <person name="Futaki S."/>
            <person name="Gariboldi M."/>
            <person name="Georgii-Hemming P."/>
            <person name="Gingeras T.R."/>
            <person name="Gojobori T."/>
            <person name="Green R.E."/>
            <person name="Gustincich S."/>
            <person name="Harbers M."/>
            <person name="Hayashi Y."/>
            <person name="Hensch T.K."/>
            <person name="Hirokawa N."/>
            <person name="Hill D."/>
            <person name="Huminiecki L."/>
            <person name="Iacono M."/>
            <person name="Ikeo K."/>
            <person name="Iwama A."/>
            <person name="Ishikawa T."/>
            <person name="Jakt M."/>
            <person name="Kanapin A."/>
            <person name="Katoh M."/>
            <person name="Kawasawa Y."/>
            <person name="Kelso J."/>
            <person name="Kitamura H."/>
            <person name="Kitano H."/>
            <person name="Kollias G."/>
            <person name="Krishnan S.P."/>
            <person name="Kruger A."/>
            <person name="Kummerfeld S.K."/>
            <person name="Kurochkin I.V."/>
            <person name="Lareau L.F."/>
            <person name="Lazarevic D."/>
            <person name="Lipovich L."/>
            <person name="Liu J."/>
            <person name="Liuni S."/>
            <person name="McWilliam S."/>
            <person name="Madan Babu M."/>
            <person name="Madera M."/>
            <person name="Marchionni L."/>
            <person name="Matsuda H."/>
            <person name="Matsuzawa S."/>
            <person name="Miki H."/>
            <person name="Mignone F."/>
            <person name="Miyake S."/>
            <person name="Morris K."/>
            <person name="Mottagui-Tabar S."/>
            <person name="Mulder N."/>
            <person name="Nakano N."/>
            <person name="Nakauchi H."/>
            <person name="Ng P."/>
            <person name="Nilsson R."/>
            <person name="Nishiguchi S."/>
            <person name="Nishikawa S."/>
            <person name="Nori F."/>
            <person name="Ohara O."/>
            <person name="Okazaki Y."/>
            <person name="Orlando V."/>
            <person name="Pang K.C."/>
            <person name="Pavan W.J."/>
            <person name="Pavesi G."/>
            <person name="Pesole G."/>
            <person name="Petrovsky N."/>
            <person name="Piazza S."/>
            <person name="Reed J."/>
            <person name="Reid J.F."/>
            <person name="Ring B.Z."/>
            <person name="Ringwald M."/>
            <person name="Rost B."/>
            <person name="Ruan Y."/>
            <person name="Salzberg S.L."/>
            <person name="Sandelin A."/>
            <person name="Schneider C."/>
            <person name="Schoenbach C."/>
            <person name="Sekiguchi K."/>
            <person name="Semple C.A."/>
            <person name="Seno S."/>
            <person name="Sessa L."/>
            <person name="Sheng Y."/>
            <person name="Shibata Y."/>
            <person name="Shimada H."/>
            <person name="Shimada K."/>
            <person name="Silva D."/>
            <person name="Sinclair B."/>
            <person name="Sperling S."/>
            <person name="Stupka E."/>
            <person name="Sugiura K."/>
            <person name="Sultana R."/>
            <person name="Takenaka Y."/>
            <person name="Taki K."/>
            <person name="Tammoja K."/>
            <person name="Tan S.L."/>
            <person name="Tang S."/>
            <person name="Taylor M.S."/>
            <person name="Tegner J."/>
            <person name="Teichmann S.A."/>
            <person name="Ueda H.R."/>
            <person name="van Nimwegen E."/>
            <person name="Verardo R."/>
            <person name="Wei C.L."/>
            <person name="Yagi K."/>
            <person name="Yamanishi H."/>
            <person name="Zabarovsky E."/>
            <person name="Zhu S."/>
            <person name="Zimmer A."/>
            <person name="Hide W."/>
            <person name="Bult C."/>
            <person name="Grimmond S.M."/>
            <person name="Teasdale R.D."/>
            <person name="Liu E.T."/>
            <person name="Brusic V."/>
            <person name="Quackenbush J."/>
            <person name="Wahlestedt C."/>
            <person name="Mattick J.S."/>
            <person name="Hume D.A."/>
            <person name="Kai C."/>
            <person name="Sasaki D."/>
            <person name="Tomaru Y."/>
            <person name="Fukuda S."/>
            <person name="Kanamori-Katayama M."/>
            <person name="Suzuki M."/>
            <person name="Aoki J."/>
            <person name="Arakawa T."/>
            <person name="Iida J."/>
            <person name="Imamura K."/>
            <person name="Itoh M."/>
            <person name="Kato T."/>
            <person name="Kawaji H."/>
            <person name="Kawagashira N."/>
            <person name="Kawashima T."/>
            <person name="Kojima M."/>
            <person name="Kondo S."/>
            <person name="Konno H."/>
            <person name="Nakano K."/>
            <person name="Ninomiya N."/>
            <person name="Nishio T."/>
            <person name="Okada M."/>
            <person name="Plessy C."/>
            <person name="Shibata K."/>
            <person name="Shiraki T."/>
            <person name="Suzuki S."/>
            <person name="Tagami M."/>
            <person name="Waki K."/>
            <person name="Watahiki A."/>
            <person name="Okamura-Oho Y."/>
            <person name="Suzuki H."/>
            <person name="Kawai J."/>
            <person name="Hayashizaki Y."/>
        </authorList>
    </citation>
    <scope>NUCLEOTIDE SEQUENCE [LARGE SCALE MRNA] OF 1-387</scope>
    <source>
        <strain>C57BL/6J</strain>
        <tissue>Spinal cord</tissue>
    </source>
</reference>
<reference key="3">
    <citation type="journal article" date="2004" name="Genome Res.">
        <title>The status, quality, and expansion of the NIH full-length cDNA project: the Mammalian Gene Collection (MGC).</title>
        <authorList>
            <consortium name="The MGC Project Team"/>
        </authorList>
    </citation>
    <scope>NUCLEOTIDE SEQUENCE [LARGE SCALE MRNA] OF 1-389</scope>
    <source>
        <tissue>Embryo</tissue>
    </source>
</reference>
<reference key="4">
    <citation type="journal article" date="2007" name="Science">
        <title>An X chromosome gene, WTX, is commonly inactivated in Wilms tumor.</title>
        <authorList>
            <person name="Rivera M.N."/>
            <person name="Kim W.J."/>
            <person name="Wells J."/>
            <person name="Driscoll D.R."/>
            <person name="Brannigan B.W."/>
            <person name="Han M."/>
            <person name="Kim J.C."/>
            <person name="Feinberg A.P."/>
            <person name="Gerald W.L."/>
            <person name="Vargas S.O."/>
            <person name="Chin L."/>
            <person name="Iafrate A.J."/>
            <person name="Bell D.W."/>
            <person name="Haber D.A."/>
        </authorList>
    </citation>
    <scope>TISSUE SPECIFICITY</scope>
    <scope>DEVELOPMENTAL STAGE</scope>
</reference>
<feature type="chain" id="PRO_0000281888" description="APC membrane recruitment protein 1">
    <location>
        <begin position="1"/>
        <end position="1132"/>
    </location>
</feature>
<feature type="region of interest" description="Disordered" evidence="3">
    <location>
        <begin position="1"/>
        <end position="256"/>
    </location>
</feature>
<feature type="region of interest" description="Disordered" evidence="3">
    <location>
        <begin position="268"/>
        <end position="301"/>
    </location>
</feature>
<feature type="region of interest" description="Disordered" evidence="3">
    <location>
        <begin position="338"/>
        <end position="423"/>
    </location>
</feature>
<feature type="region of interest" description="Disordered" evidence="3">
    <location>
        <begin position="469"/>
        <end position="505"/>
    </location>
</feature>
<feature type="region of interest" description="Disordered" evidence="3">
    <location>
        <begin position="674"/>
        <end position="699"/>
    </location>
</feature>
<feature type="region of interest" description="Disordered" evidence="3">
    <location>
        <begin position="736"/>
        <end position="770"/>
    </location>
</feature>
<feature type="region of interest" description="Disordered" evidence="3">
    <location>
        <begin position="924"/>
        <end position="949"/>
    </location>
</feature>
<feature type="region of interest" description="Disordered" evidence="3">
    <location>
        <begin position="1038"/>
        <end position="1132"/>
    </location>
</feature>
<feature type="compositionally biased region" description="Polar residues" evidence="3">
    <location>
        <begin position="1"/>
        <end position="21"/>
    </location>
</feature>
<feature type="compositionally biased region" description="Basic and acidic residues" evidence="3">
    <location>
        <begin position="24"/>
        <end position="35"/>
    </location>
</feature>
<feature type="compositionally biased region" description="Low complexity" evidence="3">
    <location>
        <begin position="121"/>
        <end position="133"/>
    </location>
</feature>
<feature type="compositionally biased region" description="Basic and acidic residues" evidence="3">
    <location>
        <begin position="195"/>
        <end position="208"/>
    </location>
</feature>
<feature type="compositionally biased region" description="Basic and acidic residues" evidence="3">
    <location>
        <begin position="218"/>
        <end position="229"/>
    </location>
</feature>
<feature type="compositionally biased region" description="Basic and acidic residues" evidence="3">
    <location>
        <begin position="281"/>
        <end position="290"/>
    </location>
</feature>
<feature type="compositionally biased region" description="Acidic residues" evidence="3">
    <location>
        <begin position="372"/>
        <end position="423"/>
    </location>
</feature>
<feature type="compositionally biased region" description="Polar residues" evidence="3">
    <location>
        <begin position="475"/>
        <end position="486"/>
    </location>
</feature>
<feature type="compositionally biased region" description="Polar residues" evidence="3">
    <location>
        <begin position="677"/>
        <end position="696"/>
    </location>
</feature>
<feature type="compositionally biased region" description="Acidic residues" evidence="3">
    <location>
        <begin position="756"/>
        <end position="765"/>
    </location>
</feature>
<feature type="compositionally biased region" description="Acidic residues" evidence="3">
    <location>
        <begin position="931"/>
        <end position="941"/>
    </location>
</feature>
<feature type="compositionally biased region" description="Polar residues" evidence="3">
    <location>
        <begin position="1059"/>
        <end position="1072"/>
    </location>
</feature>
<feature type="compositionally biased region" description="Polar residues" evidence="3">
    <location>
        <begin position="1115"/>
        <end position="1132"/>
    </location>
</feature>
<feature type="modified residue" description="N-acetylmethionine" evidence="2">
    <location>
        <position position="1"/>
    </location>
</feature>
<keyword id="KW-0007">Acetylation</keyword>
<keyword id="KW-1003">Cell membrane</keyword>
<keyword id="KW-0963">Cytoplasm</keyword>
<keyword id="KW-0446">Lipid-binding</keyword>
<keyword id="KW-0472">Membrane</keyword>
<keyword id="KW-0539">Nucleus</keyword>
<keyword id="KW-1185">Reference proteome</keyword>
<keyword id="KW-0879">Wnt signaling pathway</keyword>
<dbReference type="EMBL" id="AL671765">
    <property type="status" value="NOT_ANNOTATED_CDS"/>
    <property type="molecule type" value="Genomic_DNA"/>
</dbReference>
<dbReference type="EMBL" id="AK049774">
    <property type="protein sequence ID" value="BAC33914.1"/>
    <property type="status" value="ALT_SEQ"/>
    <property type="molecule type" value="mRNA"/>
</dbReference>
<dbReference type="EMBL" id="AK012651">
    <property type="protein sequence ID" value="BAC25373.1"/>
    <property type="status" value="ALT_FRAME"/>
    <property type="molecule type" value="mRNA"/>
</dbReference>
<dbReference type="EMBL" id="BC053442">
    <property type="protein sequence ID" value="AAH53442.1"/>
    <property type="status" value="ALT_SEQ"/>
    <property type="molecule type" value="mRNA"/>
</dbReference>
<dbReference type="CCDS" id="CCDS41067.1"/>
<dbReference type="RefSeq" id="NP_780388.2">
    <property type="nucleotide sequence ID" value="NM_175179.4"/>
</dbReference>
<dbReference type="SMR" id="Q7TS75"/>
<dbReference type="BioGRID" id="215325">
    <property type="interactions" value="6"/>
</dbReference>
<dbReference type="FunCoup" id="Q7TS75">
    <property type="interactions" value="2229"/>
</dbReference>
<dbReference type="STRING" id="10090.ENSMUSP00000109502"/>
<dbReference type="GlyGen" id="Q7TS75">
    <property type="glycosylation" value="1 site"/>
</dbReference>
<dbReference type="iPTMnet" id="Q7TS75"/>
<dbReference type="PhosphoSitePlus" id="Q7TS75"/>
<dbReference type="jPOST" id="Q7TS75"/>
<dbReference type="PaxDb" id="10090-ENSMUSP00000109502"/>
<dbReference type="PeptideAtlas" id="Q7TS75"/>
<dbReference type="ProteomicsDB" id="296399"/>
<dbReference type="Pumba" id="Q7TS75"/>
<dbReference type="Antibodypedia" id="43710">
    <property type="antibodies" value="99 antibodies from 28 providers"/>
</dbReference>
<dbReference type="DNASU" id="72345"/>
<dbReference type="Ensembl" id="ENSMUST00000084535.6">
    <property type="protein sequence ID" value="ENSMUSP00000109502.3"/>
    <property type="gene ID" value="ENSMUSG00000050332.8"/>
</dbReference>
<dbReference type="GeneID" id="72345"/>
<dbReference type="KEGG" id="mmu:72345"/>
<dbReference type="UCSC" id="uc009ttx.2">
    <property type="organism name" value="mouse"/>
</dbReference>
<dbReference type="AGR" id="MGI:1919595"/>
<dbReference type="CTD" id="139285"/>
<dbReference type="MGI" id="MGI:1919595">
    <property type="gene designation" value="Amer1"/>
</dbReference>
<dbReference type="VEuPathDB" id="HostDB:ENSMUSG00000050332"/>
<dbReference type="eggNOG" id="ENOG502QT5W">
    <property type="taxonomic scope" value="Eukaryota"/>
</dbReference>
<dbReference type="GeneTree" id="ENSGT00530000063529"/>
<dbReference type="HOGENOM" id="CLU_009351_2_0_1"/>
<dbReference type="InParanoid" id="Q7TS75"/>
<dbReference type="OMA" id="WRDFPGT"/>
<dbReference type="OrthoDB" id="70973at9989"/>
<dbReference type="PhylomeDB" id="Q7TS75"/>
<dbReference type="TreeFam" id="TF333006"/>
<dbReference type="Reactome" id="R-MMU-195253">
    <property type="pathway name" value="Degradation of beta-catenin by the destruction complex"/>
</dbReference>
<dbReference type="Reactome" id="R-MMU-196299">
    <property type="pathway name" value="Beta-catenin phosphorylation cascade"/>
</dbReference>
<dbReference type="Reactome" id="R-MMU-4641262">
    <property type="pathway name" value="Disassembly of the destruction complex and recruitment of AXIN to the membrane"/>
</dbReference>
<dbReference type="BioGRID-ORCS" id="72345">
    <property type="hits" value="1 hit in 78 CRISPR screens"/>
</dbReference>
<dbReference type="ChiTaRS" id="Amer1">
    <property type="organism name" value="mouse"/>
</dbReference>
<dbReference type="PRO" id="PR:Q7TS75"/>
<dbReference type="Proteomes" id="UP000000589">
    <property type="component" value="Chromosome X"/>
</dbReference>
<dbReference type="RNAct" id="Q7TS75">
    <property type="molecule type" value="protein"/>
</dbReference>
<dbReference type="Bgee" id="ENSMUSG00000050332">
    <property type="expression patterns" value="Expressed in dorsal pancreas and 265 other cell types or tissues"/>
</dbReference>
<dbReference type="GO" id="GO:0005737">
    <property type="term" value="C:cytoplasm"/>
    <property type="evidence" value="ECO:0007669"/>
    <property type="project" value="UniProtKB-SubCell"/>
</dbReference>
<dbReference type="GO" id="GO:0016604">
    <property type="term" value="C:nuclear body"/>
    <property type="evidence" value="ECO:0007669"/>
    <property type="project" value="Ensembl"/>
</dbReference>
<dbReference type="GO" id="GO:0005886">
    <property type="term" value="C:plasma membrane"/>
    <property type="evidence" value="ECO:0000250"/>
    <property type="project" value="UniProtKB"/>
</dbReference>
<dbReference type="GO" id="GO:0008013">
    <property type="term" value="F:beta-catenin binding"/>
    <property type="evidence" value="ECO:0000250"/>
    <property type="project" value="UniProtKB"/>
</dbReference>
<dbReference type="GO" id="GO:1904713">
    <property type="term" value="F:beta-catenin destruction complex binding"/>
    <property type="evidence" value="ECO:0007669"/>
    <property type="project" value="Ensembl"/>
</dbReference>
<dbReference type="GO" id="GO:0005546">
    <property type="term" value="F:phosphatidylinositol-4,5-bisphosphate binding"/>
    <property type="evidence" value="ECO:0000250"/>
    <property type="project" value="UniProtKB"/>
</dbReference>
<dbReference type="GO" id="GO:0060612">
    <property type="term" value="P:adipose tissue development"/>
    <property type="evidence" value="ECO:0000315"/>
    <property type="project" value="MGI"/>
</dbReference>
<dbReference type="GO" id="GO:0060348">
    <property type="term" value="P:bone development"/>
    <property type="evidence" value="ECO:0000315"/>
    <property type="project" value="MGI"/>
</dbReference>
<dbReference type="GO" id="GO:0001822">
    <property type="term" value="P:kidney development"/>
    <property type="evidence" value="ECO:0000315"/>
    <property type="project" value="MGI"/>
</dbReference>
<dbReference type="GO" id="GO:0072161">
    <property type="term" value="P:mesenchymal cell differentiation involved in kidney development"/>
    <property type="evidence" value="ECO:0000315"/>
    <property type="project" value="MGI"/>
</dbReference>
<dbReference type="GO" id="GO:0090090">
    <property type="term" value="P:negative regulation of canonical Wnt signaling pathway"/>
    <property type="evidence" value="ECO:0000250"/>
    <property type="project" value="UniProtKB"/>
</dbReference>
<dbReference type="GO" id="GO:0090263">
    <property type="term" value="P:positive regulation of canonical Wnt signaling pathway"/>
    <property type="evidence" value="ECO:0000250"/>
    <property type="project" value="UniProtKB"/>
</dbReference>
<dbReference type="GO" id="GO:0045732">
    <property type="term" value="P:positive regulation of protein catabolic process"/>
    <property type="evidence" value="ECO:0007669"/>
    <property type="project" value="Ensembl"/>
</dbReference>
<dbReference type="GO" id="GO:0031398">
    <property type="term" value="P:positive regulation of protein ubiquitination"/>
    <property type="evidence" value="ECO:0007669"/>
    <property type="project" value="Ensembl"/>
</dbReference>
<dbReference type="GO" id="GO:0060828">
    <property type="term" value="P:regulation of canonical Wnt signaling pathway"/>
    <property type="evidence" value="ECO:0000250"/>
    <property type="project" value="UniProtKB"/>
</dbReference>
<dbReference type="GO" id="GO:0016055">
    <property type="term" value="P:Wnt signaling pathway"/>
    <property type="evidence" value="ECO:0007669"/>
    <property type="project" value="UniProtKB-KW"/>
</dbReference>
<dbReference type="InterPro" id="IPR019003">
    <property type="entry name" value="AMER"/>
</dbReference>
<dbReference type="PANTHER" id="PTHR22237:SF0">
    <property type="entry name" value="APC MEMBRANE RECRUITMENT PROTEIN 1"/>
    <property type="match status" value="1"/>
</dbReference>
<dbReference type="PANTHER" id="PTHR22237">
    <property type="entry name" value="APC MEMBRANE RECRUITMENT PROTEIN 2-RELATED"/>
    <property type="match status" value="1"/>
</dbReference>
<dbReference type="Pfam" id="PF09422">
    <property type="entry name" value="AMER"/>
    <property type="match status" value="1"/>
</dbReference>